<comment type="function">
    <text evidence="1">Involved in resistance to B.thuringiensis pore-forming toxin Cry5B downstream of the sek-1 and pmk-1 MAPK kinase pathway.</text>
</comment>
<comment type="induction">
    <text evidence="1">By B.thuringiensis pore-forming toxin Cry5B.</text>
</comment>
<comment type="disruption phenotype">
    <text evidence="1">RNAi-mediated knockdown causes variable hypersensitivity to low, chronic doses of the B.thuringiensis pore-forming toxin Cry5B but not to heavy metal Cd(2+) exposure.</text>
</comment>
<comment type="similarity">
    <text evidence="2">Belongs to the arrestin family.</text>
</comment>
<sequence>MLDKIRFTVLLDRPFYQPGQTIQGHVVCEPHHPLEIDCVEGRLHGEIQYFQQLPPNHNRNGSPLPPSKTRVLIDEKAQLWKYQTVSEMLGLDVFYDENQNRHFSSESASASSSSLFTTAATFPIQIELPHFAPPSFYCPGSPVSIRFTLEIQLYNQGFKIASHEENLVVLNYESIKRQVTPKPVNFQKTFNFPKERSISLEMLLPTDVFTTTARLENCITICNRWKQSLKYVHLNIVRRISALNQNNEVIDTVKIDTTGVGLPSKTKIAVGETYSFRPTFNVPALPPNIHVNGLFKTEYSLKVTIGRAHNFVLASYEVPITIVTMDQSSRRSMQKEDILVDISASNNTLNNLPVDLLA</sequence>
<reference evidence="3" key="1">
    <citation type="journal article" date="1998" name="Science">
        <title>Genome sequence of the nematode C. elegans: a platform for investigating biology.</title>
        <authorList>
            <consortium name="The C. elegans sequencing consortium"/>
        </authorList>
    </citation>
    <scope>NUCLEOTIDE SEQUENCE [LARGE SCALE GENOMIC DNA]</scope>
    <source>
        <strain evidence="3">Bristol N2</strain>
    </source>
</reference>
<reference evidence="2" key="2">
    <citation type="journal article" date="2004" name="Proc. Natl. Acad. Sci. U.S.A.">
        <title>Mitogen-activated protein kinase pathways defend against bacterial pore-forming toxins.</title>
        <authorList>
            <person name="Huffman D.L."/>
            <person name="Abrami L."/>
            <person name="Sasik R."/>
            <person name="Corbeil J."/>
            <person name="van der Goot F.G."/>
            <person name="Aroian R.V."/>
        </authorList>
    </citation>
    <scope>FUNCTION</scope>
    <scope>INDUCTION</scope>
    <scope>DISRUPTION PHENOTYPE</scope>
</reference>
<organism evidence="3">
    <name type="scientific">Caenorhabditis elegans</name>
    <dbReference type="NCBI Taxonomy" id="6239"/>
    <lineage>
        <taxon>Eukaryota</taxon>
        <taxon>Metazoa</taxon>
        <taxon>Ecdysozoa</taxon>
        <taxon>Nematoda</taxon>
        <taxon>Chromadorea</taxon>
        <taxon>Rhabditida</taxon>
        <taxon>Rhabditina</taxon>
        <taxon>Rhabditomorpha</taxon>
        <taxon>Rhabditoidea</taxon>
        <taxon>Rhabditidae</taxon>
        <taxon>Peloderinae</taxon>
        <taxon>Caenorhabditis</taxon>
    </lineage>
</organism>
<protein>
    <recommendedName>
        <fullName evidence="2">Protein ttm-2</fullName>
    </recommendedName>
    <alternativeName>
        <fullName evidence="4">Toxin-regulated target of MAPK 2</fullName>
    </alternativeName>
</protein>
<evidence type="ECO:0000269" key="1">
    <source>
    </source>
</evidence>
<evidence type="ECO:0000305" key="2"/>
<evidence type="ECO:0000312" key="3">
    <source>
        <dbReference type="Proteomes" id="UP000001940"/>
    </source>
</evidence>
<evidence type="ECO:0000312" key="4">
    <source>
        <dbReference type="WormBase" id="F26G1.4"/>
    </source>
</evidence>
<name>TTM2_CAEEL</name>
<feature type="chain" id="PRO_0000446894" description="Protein ttm-2">
    <location>
        <begin position="1"/>
        <end position="358"/>
    </location>
</feature>
<accession>Q19829</accession>
<keyword id="KW-1185">Reference proteome</keyword>
<proteinExistence type="evidence at transcript level"/>
<gene>
    <name evidence="4" type="primary">ttm-2</name>
    <name evidence="4" type="ORF">F26G1.4</name>
</gene>
<dbReference type="EMBL" id="BX284602">
    <property type="protein sequence ID" value="CCD65847.1"/>
    <property type="molecule type" value="Genomic_DNA"/>
</dbReference>
<dbReference type="PIR" id="T16180">
    <property type="entry name" value="T16180"/>
</dbReference>
<dbReference type="RefSeq" id="NP_494855.1">
    <property type="nucleotide sequence ID" value="NM_062454.4"/>
</dbReference>
<dbReference type="SMR" id="Q19829"/>
<dbReference type="FunCoup" id="Q19829">
    <property type="interactions" value="242"/>
</dbReference>
<dbReference type="IntAct" id="Q19829">
    <property type="interactions" value="1"/>
</dbReference>
<dbReference type="STRING" id="6239.F26G1.4.1"/>
<dbReference type="PaxDb" id="6239-F26G1.4.1"/>
<dbReference type="EnsemblMetazoa" id="F26G1.4.1">
    <property type="protein sequence ID" value="F26G1.4.1"/>
    <property type="gene ID" value="WBGene00017840"/>
</dbReference>
<dbReference type="GeneID" id="184995"/>
<dbReference type="KEGG" id="cel:CELE_F26G1.4"/>
<dbReference type="UCSC" id="F26G1.4">
    <property type="organism name" value="c. elegans"/>
</dbReference>
<dbReference type="AGR" id="WB:WBGene00017840"/>
<dbReference type="CTD" id="184995"/>
<dbReference type="WormBase" id="F26G1.4">
    <property type="protein sequence ID" value="CE02696"/>
    <property type="gene ID" value="WBGene00017840"/>
    <property type="gene designation" value="ttm-2"/>
</dbReference>
<dbReference type="eggNOG" id="ENOG502TGWV">
    <property type="taxonomic scope" value="Eukaryota"/>
</dbReference>
<dbReference type="HOGENOM" id="CLU_674943_0_0_1"/>
<dbReference type="InParanoid" id="Q19829"/>
<dbReference type="OMA" id="ELWHYST"/>
<dbReference type="OrthoDB" id="2333384at2759"/>
<dbReference type="Reactome" id="R-CEL-844456">
    <property type="pathway name" value="The NLRP3 inflammasome"/>
</dbReference>
<dbReference type="PRO" id="PR:Q19829"/>
<dbReference type="Proteomes" id="UP000001940">
    <property type="component" value="Chromosome II"/>
</dbReference>
<dbReference type="Bgee" id="WBGene00017840">
    <property type="expression patterns" value="Expressed in material anatomical entity and 4 other cell types or tissues"/>
</dbReference>
<dbReference type="GO" id="GO:0005737">
    <property type="term" value="C:cytoplasm"/>
    <property type="evidence" value="ECO:0000318"/>
    <property type="project" value="GO_Central"/>
</dbReference>
<dbReference type="GO" id="GO:0015031">
    <property type="term" value="P:protein transport"/>
    <property type="evidence" value="ECO:0000318"/>
    <property type="project" value="GO_Central"/>
</dbReference>
<dbReference type="GO" id="GO:0093002">
    <property type="term" value="P:response to nematicide"/>
    <property type="evidence" value="ECO:0000315"/>
    <property type="project" value="UniProtKB"/>
</dbReference>
<dbReference type="Gene3D" id="2.60.40.640">
    <property type="match status" value="2"/>
</dbReference>
<dbReference type="InterPro" id="IPR014752">
    <property type="entry name" value="Arrestin-like_C"/>
</dbReference>
<dbReference type="InterPro" id="IPR011021">
    <property type="entry name" value="Arrestin-like_N"/>
</dbReference>
<dbReference type="InterPro" id="IPR050357">
    <property type="entry name" value="Arrestin_domain-protein"/>
</dbReference>
<dbReference type="InterPro" id="IPR014756">
    <property type="entry name" value="Ig_E-set"/>
</dbReference>
<dbReference type="PANTHER" id="PTHR11188">
    <property type="entry name" value="ARRESTIN DOMAIN CONTAINING PROTEIN"/>
    <property type="match status" value="1"/>
</dbReference>
<dbReference type="PANTHER" id="PTHR11188:SF173">
    <property type="entry name" value="PROTEIN TTM-2"/>
    <property type="match status" value="1"/>
</dbReference>
<dbReference type="Pfam" id="PF00339">
    <property type="entry name" value="Arrestin_N"/>
    <property type="match status" value="1"/>
</dbReference>
<dbReference type="SUPFAM" id="SSF81296">
    <property type="entry name" value="E set domains"/>
    <property type="match status" value="1"/>
</dbReference>